<accession>Q0IBR6</accession>
<gene>
    <name evidence="1" type="primary">cobQ</name>
    <name type="ordered locus">sync_0893</name>
</gene>
<comment type="function">
    <text evidence="1">Catalyzes amidations at positions B, D, E, and G on adenosylcobyrinic A,C-diamide. NH(2) groups are provided by glutamine, and one molecule of ATP is hydrogenolyzed for each amidation.</text>
</comment>
<comment type="pathway">
    <text evidence="1">Cofactor biosynthesis; adenosylcobalamin biosynthesis.</text>
</comment>
<comment type="similarity">
    <text evidence="1">Belongs to the CobB/CobQ family. CobQ subfamily.</text>
</comment>
<dbReference type="EMBL" id="CP000435">
    <property type="protein sequence ID" value="ABI46194.1"/>
    <property type="molecule type" value="Genomic_DNA"/>
</dbReference>
<dbReference type="RefSeq" id="WP_011618832.1">
    <property type="nucleotide sequence ID" value="NC_008319.1"/>
</dbReference>
<dbReference type="SMR" id="Q0IBR6"/>
<dbReference type="STRING" id="64471.sync_0893"/>
<dbReference type="KEGG" id="syg:sync_0893"/>
<dbReference type="eggNOG" id="COG1492">
    <property type="taxonomic scope" value="Bacteria"/>
</dbReference>
<dbReference type="HOGENOM" id="CLU_019250_2_2_3"/>
<dbReference type="OrthoDB" id="9808302at2"/>
<dbReference type="UniPathway" id="UPA00148"/>
<dbReference type="Proteomes" id="UP000001961">
    <property type="component" value="Chromosome"/>
</dbReference>
<dbReference type="GO" id="GO:0015420">
    <property type="term" value="F:ABC-type vitamin B12 transporter activity"/>
    <property type="evidence" value="ECO:0007669"/>
    <property type="project" value="UniProtKB-UniRule"/>
</dbReference>
<dbReference type="GO" id="GO:0003824">
    <property type="term" value="F:catalytic activity"/>
    <property type="evidence" value="ECO:0007669"/>
    <property type="project" value="InterPro"/>
</dbReference>
<dbReference type="GO" id="GO:0009236">
    <property type="term" value="P:cobalamin biosynthetic process"/>
    <property type="evidence" value="ECO:0007669"/>
    <property type="project" value="UniProtKB-UniRule"/>
</dbReference>
<dbReference type="CDD" id="cd01750">
    <property type="entry name" value="GATase1_CobQ"/>
    <property type="match status" value="1"/>
</dbReference>
<dbReference type="Gene3D" id="3.40.50.880">
    <property type="match status" value="1"/>
</dbReference>
<dbReference type="Gene3D" id="3.40.50.300">
    <property type="entry name" value="P-loop containing nucleotide triphosphate hydrolases"/>
    <property type="match status" value="1"/>
</dbReference>
<dbReference type="HAMAP" id="MF_00028">
    <property type="entry name" value="CobQ"/>
    <property type="match status" value="1"/>
</dbReference>
<dbReference type="InterPro" id="IPR029062">
    <property type="entry name" value="Class_I_gatase-like"/>
</dbReference>
<dbReference type="InterPro" id="IPR002586">
    <property type="entry name" value="CobQ/CobB/MinD/ParA_Nub-bd_dom"/>
</dbReference>
<dbReference type="InterPro" id="IPR033949">
    <property type="entry name" value="CobQ_GATase1"/>
</dbReference>
<dbReference type="InterPro" id="IPR004459">
    <property type="entry name" value="CobQ_synth"/>
</dbReference>
<dbReference type="InterPro" id="IPR011698">
    <property type="entry name" value="GATase_3"/>
</dbReference>
<dbReference type="InterPro" id="IPR027417">
    <property type="entry name" value="P-loop_NTPase"/>
</dbReference>
<dbReference type="NCBIfam" id="TIGR00313">
    <property type="entry name" value="cobQ"/>
    <property type="match status" value="1"/>
</dbReference>
<dbReference type="NCBIfam" id="NF001989">
    <property type="entry name" value="PRK00784.1"/>
    <property type="match status" value="1"/>
</dbReference>
<dbReference type="PANTHER" id="PTHR21343:SF1">
    <property type="entry name" value="COBYRIC ACID SYNTHASE"/>
    <property type="match status" value="1"/>
</dbReference>
<dbReference type="PANTHER" id="PTHR21343">
    <property type="entry name" value="DETHIOBIOTIN SYNTHETASE"/>
    <property type="match status" value="1"/>
</dbReference>
<dbReference type="Pfam" id="PF01656">
    <property type="entry name" value="CbiA"/>
    <property type="match status" value="1"/>
</dbReference>
<dbReference type="Pfam" id="PF07685">
    <property type="entry name" value="GATase_3"/>
    <property type="match status" value="1"/>
</dbReference>
<dbReference type="SUPFAM" id="SSF52317">
    <property type="entry name" value="Class I glutamine amidotransferase-like"/>
    <property type="match status" value="1"/>
</dbReference>
<dbReference type="SUPFAM" id="SSF52540">
    <property type="entry name" value="P-loop containing nucleoside triphosphate hydrolases"/>
    <property type="match status" value="1"/>
</dbReference>
<dbReference type="PROSITE" id="PS51274">
    <property type="entry name" value="GATASE_COBBQ"/>
    <property type="match status" value="1"/>
</dbReference>
<protein>
    <recommendedName>
        <fullName evidence="1">Cobyric acid synthase</fullName>
    </recommendedName>
</protein>
<proteinExistence type="inferred from homology"/>
<organism>
    <name type="scientific">Synechococcus sp. (strain CC9311)</name>
    <dbReference type="NCBI Taxonomy" id="64471"/>
    <lineage>
        <taxon>Bacteria</taxon>
        <taxon>Bacillati</taxon>
        <taxon>Cyanobacteriota</taxon>
        <taxon>Cyanophyceae</taxon>
        <taxon>Synechococcales</taxon>
        <taxon>Synechococcaceae</taxon>
        <taxon>Synechococcus</taxon>
    </lineage>
</organism>
<evidence type="ECO:0000255" key="1">
    <source>
        <dbReference type="HAMAP-Rule" id="MF_00028"/>
    </source>
</evidence>
<name>COBQ_SYNS3</name>
<sequence length="508" mass="55278">MTAKPALMVLGTSSGAGKSLMTAALCRVLRRRGETPLPFKGQNMSNNAWVDQAGGEMAYSQALQAWAAGLEPECAMNPVLLKPQGDSTSELIHLGHSVGSARAEHYYRDWFKPGWKAIRQGLEALQSSHPGGRLVLEGAGSPVEVNLQKRDLTNLRLAQYLRAHCVLVADIERGGVFAQIVGTLNLLRPVERPLIKGLLINRFRGRRELFDEGQRWLEANTGVPVLGVMPWLDELFPPEDSLDLLERRGRKRSAELNIAVLKLPSLSNFSDLDPLEAEPTVQLRWVAPGEELGLPDAVVIPGSKQTLRDLAAILNSGLGAALQAYNTGGGHVFGICGGMQMLGDELCDPEGLEGGAPSGNTSQAGLGLLPLRTVFSADKALRQRSSAALWPGGSHALEIEGFELHHGLTTINNASETCKPLCRDEELGWVKPFSDHGGLVAGTYLHGVFESGPWRRRWLNQLRERKGLAPLSEQQPHHSRQRDALLDRLADAFEQHINLEPLLNSSNG</sequence>
<feature type="chain" id="PRO_0000332391" description="Cobyric acid synthase">
    <location>
        <begin position="1"/>
        <end position="508"/>
    </location>
</feature>
<feature type="domain" description="GATase cobBQ-type" evidence="1">
    <location>
        <begin position="255"/>
        <end position="454"/>
    </location>
</feature>
<feature type="active site" description="Nucleophile" evidence="1">
    <location>
        <position position="336"/>
    </location>
</feature>
<feature type="active site" evidence="1">
    <location>
        <position position="446"/>
    </location>
</feature>
<reference key="1">
    <citation type="journal article" date="2006" name="Proc. Natl. Acad. Sci. U.S.A.">
        <title>Genome sequence of Synechococcus CC9311: insights into adaptation to a coastal environment.</title>
        <authorList>
            <person name="Palenik B."/>
            <person name="Ren Q."/>
            <person name="Dupont C.L."/>
            <person name="Myers G.S."/>
            <person name="Heidelberg J.F."/>
            <person name="Badger J.H."/>
            <person name="Madupu R."/>
            <person name="Nelson W.C."/>
            <person name="Brinkac L.M."/>
            <person name="Dodson R.J."/>
            <person name="Durkin A.S."/>
            <person name="Daugherty S.C."/>
            <person name="Sullivan S.A."/>
            <person name="Khouri H."/>
            <person name="Mohamoud Y."/>
            <person name="Halpin R."/>
            <person name="Paulsen I.T."/>
        </authorList>
    </citation>
    <scope>NUCLEOTIDE SEQUENCE [LARGE SCALE GENOMIC DNA]</scope>
    <source>
        <strain>CC9311</strain>
    </source>
</reference>
<keyword id="KW-0169">Cobalamin biosynthesis</keyword>
<keyword id="KW-0315">Glutamine amidotransferase</keyword>
<keyword id="KW-1185">Reference proteome</keyword>